<gene>
    <name evidence="1" type="primary">rpoB2</name>
    <name type="ordered locus">NFA_50990</name>
</gene>
<accession>Q5YPE0</accession>
<protein>
    <recommendedName>
        <fullName evidence="1">DNA-directed RNA polymerase subunit beta 2</fullName>
        <shortName evidence="1">RNAP subunit beta 2</shortName>
        <ecNumber evidence="1">2.7.7.6</ecNumber>
    </recommendedName>
    <alternativeName>
        <fullName evidence="1">RNA polymerase subunit beta 2</fullName>
    </alternativeName>
    <alternativeName>
        <fullName evidence="1">Transcriptase subunit beta 2</fullName>
    </alternativeName>
</protein>
<dbReference type="EC" id="2.7.7.6" evidence="1"/>
<dbReference type="EMBL" id="AP006618">
    <property type="protein sequence ID" value="BAD59951.1"/>
    <property type="molecule type" value="Genomic_DNA"/>
</dbReference>
<dbReference type="RefSeq" id="WP_011211633.1">
    <property type="nucleotide sequence ID" value="NC_006361.1"/>
</dbReference>
<dbReference type="SMR" id="Q5YPE0"/>
<dbReference type="STRING" id="247156.NFA_50990"/>
<dbReference type="GeneID" id="61135673"/>
<dbReference type="KEGG" id="nfa:NFA_50990"/>
<dbReference type="eggNOG" id="COG0085">
    <property type="taxonomic scope" value="Bacteria"/>
</dbReference>
<dbReference type="HOGENOM" id="CLU_000524_4_1_11"/>
<dbReference type="OrthoDB" id="9803954at2"/>
<dbReference type="Proteomes" id="UP000006820">
    <property type="component" value="Chromosome"/>
</dbReference>
<dbReference type="GO" id="GO:0000428">
    <property type="term" value="C:DNA-directed RNA polymerase complex"/>
    <property type="evidence" value="ECO:0007669"/>
    <property type="project" value="UniProtKB-KW"/>
</dbReference>
<dbReference type="GO" id="GO:0003677">
    <property type="term" value="F:DNA binding"/>
    <property type="evidence" value="ECO:0007669"/>
    <property type="project" value="UniProtKB-UniRule"/>
</dbReference>
<dbReference type="GO" id="GO:0003899">
    <property type="term" value="F:DNA-directed RNA polymerase activity"/>
    <property type="evidence" value="ECO:0007669"/>
    <property type="project" value="UniProtKB-UniRule"/>
</dbReference>
<dbReference type="GO" id="GO:0032549">
    <property type="term" value="F:ribonucleoside binding"/>
    <property type="evidence" value="ECO:0007669"/>
    <property type="project" value="InterPro"/>
</dbReference>
<dbReference type="GO" id="GO:0006351">
    <property type="term" value="P:DNA-templated transcription"/>
    <property type="evidence" value="ECO:0007669"/>
    <property type="project" value="UniProtKB-UniRule"/>
</dbReference>
<dbReference type="CDD" id="cd00653">
    <property type="entry name" value="RNA_pol_B_RPB2"/>
    <property type="match status" value="1"/>
</dbReference>
<dbReference type="FunFam" id="2.40.50.150:FF:000001">
    <property type="entry name" value="DNA-directed RNA polymerase subunit beta"/>
    <property type="match status" value="1"/>
</dbReference>
<dbReference type="FunFam" id="3.90.1800.10:FF:000005">
    <property type="entry name" value="DNA-directed RNA polymerase subunit beta"/>
    <property type="match status" value="1"/>
</dbReference>
<dbReference type="Gene3D" id="2.40.50.100">
    <property type="match status" value="1"/>
</dbReference>
<dbReference type="Gene3D" id="2.40.50.150">
    <property type="match status" value="1"/>
</dbReference>
<dbReference type="Gene3D" id="3.90.1100.10">
    <property type="match status" value="1"/>
</dbReference>
<dbReference type="Gene3D" id="2.30.150.10">
    <property type="entry name" value="DNA-directed RNA polymerase, beta subunit, external 1 domain"/>
    <property type="match status" value="1"/>
</dbReference>
<dbReference type="Gene3D" id="2.40.270.10">
    <property type="entry name" value="DNA-directed RNA polymerase, subunit 2, domain 6"/>
    <property type="match status" value="1"/>
</dbReference>
<dbReference type="Gene3D" id="3.90.1800.10">
    <property type="entry name" value="RNA polymerase alpha subunit dimerisation domain"/>
    <property type="match status" value="1"/>
</dbReference>
<dbReference type="Gene3D" id="3.90.1110.10">
    <property type="entry name" value="RNA polymerase Rpb2, domain 2"/>
    <property type="match status" value="1"/>
</dbReference>
<dbReference type="HAMAP" id="MF_01321">
    <property type="entry name" value="RNApol_bact_RpoB"/>
    <property type="match status" value="1"/>
</dbReference>
<dbReference type="InterPro" id="IPR042107">
    <property type="entry name" value="DNA-dir_RNA_pol_bsu_ext_1_sf"/>
</dbReference>
<dbReference type="InterPro" id="IPR019462">
    <property type="entry name" value="DNA-dir_RNA_pol_bsu_external_1"/>
</dbReference>
<dbReference type="InterPro" id="IPR015712">
    <property type="entry name" value="DNA-dir_RNA_pol_su2"/>
</dbReference>
<dbReference type="InterPro" id="IPR007120">
    <property type="entry name" value="DNA-dir_RNAP_su2_dom"/>
</dbReference>
<dbReference type="InterPro" id="IPR037033">
    <property type="entry name" value="DNA-dir_RNAP_su2_hyb_sf"/>
</dbReference>
<dbReference type="InterPro" id="IPR010243">
    <property type="entry name" value="RNA_pol_bsu_bac"/>
</dbReference>
<dbReference type="InterPro" id="IPR007121">
    <property type="entry name" value="RNA_pol_bsu_CS"/>
</dbReference>
<dbReference type="InterPro" id="IPR007644">
    <property type="entry name" value="RNA_pol_bsu_protrusion"/>
</dbReference>
<dbReference type="InterPro" id="IPR007642">
    <property type="entry name" value="RNA_pol_Rpb2_2"/>
</dbReference>
<dbReference type="InterPro" id="IPR037034">
    <property type="entry name" value="RNA_pol_Rpb2_2_sf"/>
</dbReference>
<dbReference type="InterPro" id="IPR007645">
    <property type="entry name" value="RNA_pol_Rpb2_3"/>
</dbReference>
<dbReference type="InterPro" id="IPR007641">
    <property type="entry name" value="RNA_pol_Rpb2_7"/>
</dbReference>
<dbReference type="InterPro" id="IPR014724">
    <property type="entry name" value="RNA_pol_RPB2_OB-fold"/>
</dbReference>
<dbReference type="NCBIfam" id="NF001616">
    <property type="entry name" value="PRK00405.1"/>
    <property type="match status" value="1"/>
</dbReference>
<dbReference type="NCBIfam" id="TIGR02013">
    <property type="entry name" value="rpoB"/>
    <property type="match status" value="1"/>
</dbReference>
<dbReference type="PANTHER" id="PTHR20856">
    <property type="entry name" value="DNA-DIRECTED RNA POLYMERASE I SUBUNIT 2"/>
    <property type="match status" value="1"/>
</dbReference>
<dbReference type="Pfam" id="PF04563">
    <property type="entry name" value="RNA_pol_Rpb2_1"/>
    <property type="match status" value="1"/>
</dbReference>
<dbReference type="Pfam" id="PF04561">
    <property type="entry name" value="RNA_pol_Rpb2_2"/>
    <property type="match status" value="1"/>
</dbReference>
<dbReference type="Pfam" id="PF04565">
    <property type="entry name" value="RNA_pol_Rpb2_3"/>
    <property type="match status" value="1"/>
</dbReference>
<dbReference type="Pfam" id="PF10385">
    <property type="entry name" value="RNA_pol_Rpb2_45"/>
    <property type="match status" value="1"/>
</dbReference>
<dbReference type="Pfam" id="PF00562">
    <property type="entry name" value="RNA_pol_Rpb2_6"/>
    <property type="match status" value="1"/>
</dbReference>
<dbReference type="Pfam" id="PF04560">
    <property type="entry name" value="RNA_pol_Rpb2_7"/>
    <property type="match status" value="1"/>
</dbReference>
<dbReference type="SUPFAM" id="SSF64484">
    <property type="entry name" value="beta and beta-prime subunits of DNA dependent RNA-polymerase"/>
    <property type="match status" value="1"/>
</dbReference>
<dbReference type="PROSITE" id="PS01166">
    <property type="entry name" value="RNA_POL_BETA"/>
    <property type="match status" value="1"/>
</dbReference>
<comment type="function">
    <text evidence="1">DNA-dependent RNA polymerase catalyzes the transcription of DNA into RNA using the four ribonucleoside triphosphates as substrates.</text>
</comment>
<comment type="catalytic activity">
    <reaction evidence="1">
        <text>RNA(n) + a ribonucleoside 5'-triphosphate = RNA(n+1) + diphosphate</text>
        <dbReference type="Rhea" id="RHEA:21248"/>
        <dbReference type="Rhea" id="RHEA-COMP:14527"/>
        <dbReference type="Rhea" id="RHEA-COMP:17342"/>
        <dbReference type="ChEBI" id="CHEBI:33019"/>
        <dbReference type="ChEBI" id="CHEBI:61557"/>
        <dbReference type="ChEBI" id="CHEBI:140395"/>
        <dbReference type="EC" id="2.7.7.6"/>
    </reaction>
</comment>
<comment type="subunit">
    <text evidence="1">The RNAP catalytic core consists of 2 alpha, 1 beta, 1 beta' and 1 omega subunit. When a sigma factor is associated with the core the holoenzyme is formed, which can initiate transcription.</text>
</comment>
<comment type="similarity">
    <text evidence="1">Belongs to the RNA polymerase beta chain family.</text>
</comment>
<reference key="1">
    <citation type="journal article" date="2004" name="Proc. Natl. Acad. Sci. U.S.A.">
        <title>The complete genomic sequence of Nocardia farcinica IFM 10152.</title>
        <authorList>
            <person name="Ishikawa J."/>
            <person name="Yamashita A."/>
            <person name="Mikami Y."/>
            <person name="Hoshino Y."/>
            <person name="Kurita H."/>
            <person name="Hotta K."/>
            <person name="Shiba T."/>
            <person name="Hattori M."/>
        </authorList>
    </citation>
    <scope>NUCLEOTIDE SEQUENCE [LARGE SCALE GENOMIC DNA]</scope>
    <source>
        <strain>IFM 10152</strain>
    </source>
</reference>
<evidence type="ECO:0000255" key="1">
    <source>
        <dbReference type="HAMAP-Rule" id="MF_01321"/>
    </source>
</evidence>
<proteinExistence type="inferred from homology"/>
<organism>
    <name type="scientific">Nocardia farcinica (strain IFM 10152)</name>
    <dbReference type="NCBI Taxonomy" id="247156"/>
    <lineage>
        <taxon>Bacteria</taxon>
        <taxon>Bacillati</taxon>
        <taxon>Actinomycetota</taxon>
        <taxon>Actinomycetes</taxon>
        <taxon>Mycobacteriales</taxon>
        <taxon>Nocardiaceae</taxon>
        <taxon>Nocardia</taxon>
    </lineage>
</organism>
<name>RPOB2_NOCFA</name>
<sequence>MLEGRILAVSTQTKAVAGIPGAPKRVSFAKIREPLEVPGLLDLQTESFAWLIGSPEWRERAAARGDVGLVGGLEEVLEELSPIEDFSGSMSLSFSDPRFEEVKASIDECKEKDMTYAAPLFVTAEFINNNTGEIKSQTVFMGDFPMMTDKGTFIINGTERVVVSQLVRSPGVYFDHSIDKGTEKDLHSVRVIPSRGAWLEFDVDKRDTVGVRIDRKRRQPVTVLLKALGWTTEEIAERFGFSEIMMSTLEKDNTAGQDEALLDIYRKLRPGEPPTKESAQTLLENLFFKEKRYDLARVGRYKINKKLGIHVGEPVTGSVLTKEDIVTTIEYLVRLHAGDKTMTAPGGVEVPVEVDDIDHFGNRRLRTVGELIQNQIRVGLSRMERVVRERMTTQDVEAITPQTLINIRPVVAAIKEFFGTSQLSQFMDQNNPLSGLTHKRRLSALGPGGLSRERAGLEVRDVHPSHYGRMCPIETPEGPNIGLIGSLSVYARVNPFGFIETPYRKVVDGRVTDEVVYLTADEEDRHVRAQANSPVGPDGRFLEDRVLCRRGNEEMEYVAATEVDFMDVSPRQMVSVATAMIPFLEHDDANRALMGANMQRQAVPLIRSEAPIVGTGMELRAAVDAGDVVVNEKAGVVEEVSADYVTVMADDGTRKSYRMRKFNRSNQGTCSNQRPIVDEGQRVEAGQVLADGPCTENGEMALGKNLLVAIMPWEGHNYEDAIILSQRLVEQDVLTSIHIEEHEIDARDTKLGAEEITRDIPNVSDEVLADLDERGIVRIGAEVRDGDILVGKVTPKGETELTPEERLLRAIFGEKAREVRDTSLKVPHGESGKVIGIRVFSREDDDDLPPGVNELVRVYVAQKRKIQDGDKLAGRHGNKGVIGKILPTEDMPFLPDGTPVDIILNTHGVPRRMNIGQILETHLGWIGKAGWKVEGNPEWAKDLPEEMWEAPADSNIATPVFDGAREEELTGLLGSTLPNRDGERMVDDNGKAVLFDGRSGEPFPYPVAVGYMYILKLHHLVDDKIHARSTGPYSMITQQPLGGKAQFGGQRFGEMECWAMQAYGAAYTLQELLTIKSDDVVGRVKVYEAIVKGENIPEPGIPESFKVLLKELQSLCLNVEVLSSDGAAIELREGEDEDLERAAANLGINLSRNEAATVDDLAN</sequence>
<keyword id="KW-0240">DNA-directed RNA polymerase</keyword>
<keyword id="KW-0548">Nucleotidyltransferase</keyword>
<keyword id="KW-1185">Reference proteome</keyword>
<keyword id="KW-0804">Transcription</keyword>
<keyword id="KW-0808">Transferase</keyword>
<feature type="chain" id="PRO_0000224085" description="DNA-directed RNA polymerase subunit beta 2">
    <location>
        <begin position="1"/>
        <end position="1163"/>
    </location>
</feature>